<evidence type="ECO:0000255" key="1">
    <source>
        <dbReference type="HAMAP-Rule" id="MF_00131"/>
    </source>
</evidence>
<reference key="1">
    <citation type="journal article" date="2009" name="Environ. Microbiol.">
        <title>The genome of Polaromonas naphthalenivorans strain CJ2, isolated from coal tar-contaminated sediment, reveals physiological and metabolic versatility and evolution through extensive horizontal gene transfer.</title>
        <authorList>
            <person name="Yagi J.M."/>
            <person name="Sims D."/>
            <person name="Brettin T."/>
            <person name="Bruce D."/>
            <person name="Madsen E.L."/>
        </authorList>
    </citation>
    <scope>NUCLEOTIDE SEQUENCE [LARGE SCALE GENOMIC DNA]</scope>
    <source>
        <strain>CJ2</strain>
    </source>
</reference>
<keyword id="KW-0028">Amino-acid biosynthesis</keyword>
<keyword id="KW-0057">Aromatic amino acid biosynthesis</keyword>
<keyword id="KW-0456">Lyase</keyword>
<keyword id="KW-1185">Reference proteome</keyword>
<keyword id="KW-0822">Tryptophan biosynthesis</keyword>
<gene>
    <name evidence="1" type="primary">trpA</name>
    <name type="ordered locus">Pnap_3047</name>
</gene>
<organism>
    <name type="scientific">Polaromonas naphthalenivorans (strain CJ2)</name>
    <dbReference type="NCBI Taxonomy" id="365044"/>
    <lineage>
        <taxon>Bacteria</taxon>
        <taxon>Pseudomonadati</taxon>
        <taxon>Pseudomonadota</taxon>
        <taxon>Betaproteobacteria</taxon>
        <taxon>Burkholderiales</taxon>
        <taxon>Comamonadaceae</taxon>
        <taxon>Polaromonas</taxon>
    </lineage>
</organism>
<dbReference type="EC" id="4.2.1.20" evidence="1"/>
<dbReference type="EMBL" id="CP000529">
    <property type="protein sequence ID" value="ABM38346.1"/>
    <property type="molecule type" value="Genomic_DNA"/>
</dbReference>
<dbReference type="RefSeq" id="WP_011802418.1">
    <property type="nucleotide sequence ID" value="NC_008781.1"/>
</dbReference>
<dbReference type="SMR" id="A1VRR8"/>
<dbReference type="STRING" id="365044.Pnap_3047"/>
<dbReference type="KEGG" id="pna:Pnap_3047"/>
<dbReference type="eggNOG" id="COG0159">
    <property type="taxonomic scope" value="Bacteria"/>
</dbReference>
<dbReference type="HOGENOM" id="CLU_016734_0_0_4"/>
<dbReference type="OrthoDB" id="9804578at2"/>
<dbReference type="UniPathway" id="UPA00035">
    <property type="reaction ID" value="UER00044"/>
</dbReference>
<dbReference type="Proteomes" id="UP000000644">
    <property type="component" value="Chromosome"/>
</dbReference>
<dbReference type="GO" id="GO:0005829">
    <property type="term" value="C:cytosol"/>
    <property type="evidence" value="ECO:0007669"/>
    <property type="project" value="TreeGrafter"/>
</dbReference>
<dbReference type="GO" id="GO:0004834">
    <property type="term" value="F:tryptophan synthase activity"/>
    <property type="evidence" value="ECO:0007669"/>
    <property type="project" value="UniProtKB-UniRule"/>
</dbReference>
<dbReference type="CDD" id="cd04724">
    <property type="entry name" value="Tryptophan_synthase_alpha"/>
    <property type="match status" value="1"/>
</dbReference>
<dbReference type="FunFam" id="3.20.20.70:FF:000037">
    <property type="entry name" value="Tryptophan synthase alpha chain"/>
    <property type="match status" value="1"/>
</dbReference>
<dbReference type="Gene3D" id="3.20.20.70">
    <property type="entry name" value="Aldolase class I"/>
    <property type="match status" value="1"/>
</dbReference>
<dbReference type="HAMAP" id="MF_00131">
    <property type="entry name" value="Trp_synth_alpha"/>
    <property type="match status" value="1"/>
</dbReference>
<dbReference type="InterPro" id="IPR013785">
    <property type="entry name" value="Aldolase_TIM"/>
</dbReference>
<dbReference type="InterPro" id="IPR011060">
    <property type="entry name" value="RibuloseP-bd_barrel"/>
</dbReference>
<dbReference type="InterPro" id="IPR002028">
    <property type="entry name" value="Trp_synthase_suA"/>
</dbReference>
<dbReference type="NCBIfam" id="TIGR00262">
    <property type="entry name" value="trpA"/>
    <property type="match status" value="1"/>
</dbReference>
<dbReference type="PANTHER" id="PTHR43406:SF1">
    <property type="entry name" value="TRYPTOPHAN SYNTHASE ALPHA CHAIN, CHLOROPLASTIC"/>
    <property type="match status" value="1"/>
</dbReference>
<dbReference type="PANTHER" id="PTHR43406">
    <property type="entry name" value="TRYPTOPHAN SYNTHASE, ALPHA CHAIN"/>
    <property type="match status" value="1"/>
</dbReference>
<dbReference type="Pfam" id="PF00290">
    <property type="entry name" value="Trp_syntA"/>
    <property type="match status" value="1"/>
</dbReference>
<dbReference type="SUPFAM" id="SSF51366">
    <property type="entry name" value="Ribulose-phoshate binding barrel"/>
    <property type="match status" value="1"/>
</dbReference>
<protein>
    <recommendedName>
        <fullName evidence="1">Tryptophan synthase alpha chain</fullName>
        <ecNumber evidence="1">4.2.1.20</ecNumber>
    </recommendedName>
</protein>
<feature type="chain" id="PRO_1000018247" description="Tryptophan synthase alpha chain">
    <location>
        <begin position="1"/>
        <end position="272"/>
    </location>
</feature>
<feature type="active site" description="Proton acceptor" evidence="1">
    <location>
        <position position="49"/>
    </location>
</feature>
<feature type="active site" description="Proton acceptor" evidence="1">
    <location>
        <position position="60"/>
    </location>
</feature>
<name>TRPA_POLNA</name>
<proteinExistence type="inferred from homology"/>
<comment type="function">
    <text evidence="1">The alpha subunit is responsible for the aldol cleavage of indoleglycerol phosphate to indole and glyceraldehyde 3-phosphate.</text>
</comment>
<comment type="catalytic activity">
    <reaction evidence="1">
        <text>(1S,2R)-1-C-(indol-3-yl)glycerol 3-phosphate + L-serine = D-glyceraldehyde 3-phosphate + L-tryptophan + H2O</text>
        <dbReference type="Rhea" id="RHEA:10532"/>
        <dbReference type="ChEBI" id="CHEBI:15377"/>
        <dbReference type="ChEBI" id="CHEBI:33384"/>
        <dbReference type="ChEBI" id="CHEBI:57912"/>
        <dbReference type="ChEBI" id="CHEBI:58866"/>
        <dbReference type="ChEBI" id="CHEBI:59776"/>
        <dbReference type="EC" id="4.2.1.20"/>
    </reaction>
</comment>
<comment type="pathway">
    <text evidence="1">Amino-acid biosynthesis; L-tryptophan biosynthesis; L-tryptophan from chorismate: step 5/5.</text>
</comment>
<comment type="subunit">
    <text evidence="1">Tetramer of two alpha and two beta chains.</text>
</comment>
<comment type="similarity">
    <text evidence="1">Belongs to the TrpA family.</text>
</comment>
<sequence length="272" mass="28912">MSRIESTFSSLKTQGRKALIPYVTAGFPFADVTPELMHGMVAGGADVIELGMPFSDPSADGPVIQKAGEKALSFGIGLVQVLEMVRIFRTKDHTTPVVLMGYANPVERYDIKHGAGASESAFIRDAAAAGVDGMLIVDYPPEECVEFSARLKAHGMDLIFLLAPTSTDARMAQVAQVASGYVYYVSLKGVTGAGTLDVDAVEAMLPRIRRHVNVPVGVGFGIRDAATAKAIGKVADAVVIGSKIIQLIENQPRDRVAAVAHDFLKEIRSALD</sequence>
<accession>A1VRR8</accession>